<organism>
    <name type="scientific">Haemophilus influenzae (strain 86-028NP)</name>
    <dbReference type="NCBI Taxonomy" id="281310"/>
    <lineage>
        <taxon>Bacteria</taxon>
        <taxon>Pseudomonadati</taxon>
        <taxon>Pseudomonadota</taxon>
        <taxon>Gammaproteobacteria</taxon>
        <taxon>Pasteurellales</taxon>
        <taxon>Pasteurellaceae</taxon>
        <taxon>Haemophilus</taxon>
    </lineage>
</organism>
<reference key="1">
    <citation type="journal article" date="2005" name="J. Bacteriol.">
        <title>Genomic sequence of an otitis media isolate of nontypeable Haemophilus influenzae: comparative study with H. influenzae serotype d, strain KW20.</title>
        <authorList>
            <person name="Harrison A."/>
            <person name="Dyer D.W."/>
            <person name="Gillaspy A."/>
            <person name="Ray W.C."/>
            <person name="Mungur R."/>
            <person name="Carson M.B."/>
            <person name="Zhong H."/>
            <person name="Gipson J."/>
            <person name="Gipson M."/>
            <person name="Johnson L.S."/>
            <person name="Lewis L."/>
            <person name="Bakaletz L.O."/>
            <person name="Munson R.S. Jr."/>
        </authorList>
    </citation>
    <scope>NUCLEOTIDE SEQUENCE [LARGE SCALE GENOMIC DNA]</scope>
    <source>
        <strain>86-028NP</strain>
    </source>
</reference>
<comment type="similarity">
    <text evidence="1">Belongs to the UPF0125 (RnfH) family.</text>
</comment>
<gene>
    <name evidence="1" type="primary">rnfH</name>
    <name type="ordered locus">NTHI0516</name>
</gene>
<feature type="chain" id="PRO_1000013574" description="Protein RnfH">
    <location>
        <begin position="1"/>
        <end position="102"/>
    </location>
</feature>
<feature type="strand" evidence="2">
    <location>
        <begin position="3"/>
        <end position="12"/>
    </location>
</feature>
<feature type="strand" evidence="2">
    <location>
        <begin position="15"/>
        <end position="24"/>
    </location>
</feature>
<feature type="helix" evidence="2">
    <location>
        <begin position="29"/>
        <end position="36"/>
    </location>
</feature>
<feature type="helix" evidence="2">
    <location>
        <begin position="38"/>
        <end position="41"/>
    </location>
</feature>
<feature type="turn" evidence="2">
    <location>
        <begin position="47"/>
        <end position="49"/>
    </location>
</feature>
<feature type="strand" evidence="2">
    <location>
        <begin position="50"/>
        <end position="56"/>
    </location>
</feature>
<feature type="strand" evidence="2">
    <location>
        <begin position="70"/>
        <end position="73"/>
    </location>
</feature>
<keyword id="KW-0002">3D-structure</keyword>
<dbReference type="EMBL" id="CP000057">
    <property type="protein sequence ID" value="AAX87450.1"/>
    <property type="molecule type" value="Genomic_DNA"/>
</dbReference>
<dbReference type="RefSeq" id="WP_005649214.1">
    <property type="nucleotide sequence ID" value="NC_007146.2"/>
</dbReference>
<dbReference type="PDB" id="2HJ1">
    <property type="method" value="X-ray"/>
    <property type="resolution" value="2.10 A"/>
    <property type="chains" value="A/B=2-86"/>
</dbReference>
<dbReference type="PDBsum" id="2HJ1"/>
<dbReference type="SMR" id="Q4QNE7"/>
<dbReference type="KEGG" id="hit:NTHI0516"/>
<dbReference type="HOGENOM" id="CLU_150721_1_0_6"/>
<dbReference type="EvolutionaryTrace" id="Q4QNE7"/>
<dbReference type="Proteomes" id="UP000002525">
    <property type="component" value="Chromosome"/>
</dbReference>
<dbReference type="Gene3D" id="3.10.20.280">
    <property type="entry name" value="RnfH-like"/>
    <property type="match status" value="1"/>
</dbReference>
<dbReference type="HAMAP" id="MF_00460">
    <property type="entry name" value="UPF0125_RnfH"/>
    <property type="match status" value="1"/>
</dbReference>
<dbReference type="InterPro" id="IPR016155">
    <property type="entry name" value="Mopterin_synth/thiamin_S_b"/>
</dbReference>
<dbReference type="InterPro" id="IPR005346">
    <property type="entry name" value="RnfH"/>
</dbReference>
<dbReference type="InterPro" id="IPR037021">
    <property type="entry name" value="RnfH_sf"/>
</dbReference>
<dbReference type="NCBIfam" id="NF002490">
    <property type="entry name" value="PRK01777.1"/>
    <property type="match status" value="1"/>
</dbReference>
<dbReference type="PANTHER" id="PTHR37483">
    <property type="entry name" value="UPF0125 PROTEIN RATB"/>
    <property type="match status" value="1"/>
</dbReference>
<dbReference type="PANTHER" id="PTHR37483:SF1">
    <property type="entry name" value="UPF0125 PROTEIN RATB"/>
    <property type="match status" value="1"/>
</dbReference>
<dbReference type="Pfam" id="PF03658">
    <property type="entry name" value="Ub-RnfH"/>
    <property type="match status" value="1"/>
</dbReference>
<dbReference type="SUPFAM" id="SSF54285">
    <property type="entry name" value="MoaD/ThiS"/>
    <property type="match status" value="1"/>
</dbReference>
<accession>Q4QNE7</accession>
<sequence>MNQINIEIAYAFPERYYLKSFQVDEGITVQTAITQSGILSQFPEIDLSTNKIGIFSRPIKLTDVLKEGDRIEIYRPLLADPKEIRRKRAAEQAAAKDKEKGA</sequence>
<name>RNFH_HAEI8</name>
<protein>
    <recommendedName>
        <fullName evidence="1">Protein RnfH</fullName>
    </recommendedName>
</protein>
<evidence type="ECO:0000255" key="1">
    <source>
        <dbReference type="HAMAP-Rule" id="MF_00460"/>
    </source>
</evidence>
<evidence type="ECO:0007829" key="2">
    <source>
        <dbReference type="PDB" id="2HJ1"/>
    </source>
</evidence>
<proteinExistence type="evidence at protein level"/>